<gene>
    <name evidence="1" type="primary">rplS</name>
    <name type="ordered locus">Ccur92_12480</name>
    <name type="ORF">CCV52592_0680</name>
</gene>
<keyword id="KW-1185">Reference proteome</keyword>
<keyword id="KW-0687">Ribonucleoprotein</keyword>
<keyword id="KW-0689">Ribosomal protein</keyword>
<organism>
    <name type="scientific">Campylobacter curvus (strain 525.92)</name>
    <dbReference type="NCBI Taxonomy" id="360105"/>
    <lineage>
        <taxon>Bacteria</taxon>
        <taxon>Pseudomonadati</taxon>
        <taxon>Campylobacterota</taxon>
        <taxon>Epsilonproteobacteria</taxon>
        <taxon>Campylobacterales</taxon>
        <taxon>Campylobacteraceae</taxon>
        <taxon>Campylobacter</taxon>
    </lineage>
</organism>
<protein>
    <recommendedName>
        <fullName evidence="1">Large ribosomal subunit protein bL19</fullName>
    </recommendedName>
    <alternativeName>
        <fullName evidence="2">50S ribosomal protein L19</fullName>
    </alternativeName>
</protein>
<comment type="function">
    <text evidence="1">This protein is located at the 30S-50S ribosomal subunit interface and may play a role in the structure and function of the aminoacyl-tRNA binding site.</text>
</comment>
<comment type="similarity">
    <text evidence="1">Belongs to the bacterial ribosomal protein bL19 family.</text>
</comment>
<name>RL19_CAMC5</name>
<accession>A7GZB0</accession>
<feature type="chain" id="PRO_1000049652" description="Large ribosomal subunit protein bL19">
    <location>
        <begin position="1"/>
        <end position="118"/>
    </location>
</feature>
<dbReference type="EMBL" id="CP000767">
    <property type="protein sequence ID" value="EAU00412.1"/>
    <property type="molecule type" value="Genomic_DNA"/>
</dbReference>
<dbReference type="RefSeq" id="WP_009651267.1">
    <property type="nucleotide sequence ID" value="NC_009715.2"/>
</dbReference>
<dbReference type="SMR" id="A7GZB0"/>
<dbReference type="STRING" id="360105.CCV52592_0680"/>
<dbReference type="GeneID" id="61002552"/>
<dbReference type="KEGG" id="ccv:CCV52592_0680"/>
<dbReference type="HOGENOM" id="CLU_103507_2_1_7"/>
<dbReference type="OrthoDB" id="9803541at2"/>
<dbReference type="Proteomes" id="UP000006380">
    <property type="component" value="Chromosome"/>
</dbReference>
<dbReference type="GO" id="GO:0022625">
    <property type="term" value="C:cytosolic large ribosomal subunit"/>
    <property type="evidence" value="ECO:0007669"/>
    <property type="project" value="TreeGrafter"/>
</dbReference>
<dbReference type="GO" id="GO:0003735">
    <property type="term" value="F:structural constituent of ribosome"/>
    <property type="evidence" value="ECO:0007669"/>
    <property type="project" value="InterPro"/>
</dbReference>
<dbReference type="GO" id="GO:0006412">
    <property type="term" value="P:translation"/>
    <property type="evidence" value="ECO:0007669"/>
    <property type="project" value="UniProtKB-UniRule"/>
</dbReference>
<dbReference type="FunFam" id="2.30.30.790:FF:000001">
    <property type="entry name" value="50S ribosomal protein L19"/>
    <property type="match status" value="1"/>
</dbReference>
<dbReference type="Gene3D" id="2.30.30.790">
    <property type="match status" value="1"/>
</dbReference>
<dbReference type="HAMAP" id="MF_00402">
    <property type="entry name" value="Ribosomal_bL19"/>
    <property type="match status" value="1"/>
</dbReference>
<dbReference type="InterPro" id="IPR001857">
    <property type="entry name" value="Ribosomal_bL19"/>
</dbReference>
<dbReference type="InterPro" id="IPR018257">
    <property type="entry name" value="Ribosomal_bL19_CS"/>
</dbReference>
<dbReference type="InterPro" id="IPR038657">
    <property type="entry name" value="Ribosomal_bL19_sf"/>
</dbReference>
<dbReference type="InterPro" id="IPR008991">
    <property type="entry name" value="Translation_prot_SH3-like_sf"/>
</dbReference>
<dbReference type="NCBIfam" id="TIGR01024">
    <property type="entry name" value="rplS_bact"/>
    <property type="match status" value="1"/>
</dbReference>
<dbReference type="PANTHER" id="PTHR15680:SF9">
    <property type="entry name" value="LARGE RIBOSOMAL SUBUNIT PROTEIN BL19M"/>
    <property type="match status" value="1"/>
</dbReference>
<dbReference type="PANTHER" id="PTHR15680">
    <property type="entry name" value="RIBOSOMAL PROTEIN L19"/>
    <property type="match status" value="1"/>
</dbReference>
<dbReference type="Pfam" id="PF01245">
    <property type="entry name" value="Ribosomal_L19"/>
    <property type="match status" value="1"/>
</dbReference>
<dbReference type="PIRSF" id="PIRSF002191">
    <property type="entry name" value="Ribosomal_L19"/>
    <property type="match status" value="1"/>
</dbReference>
<dbReference type="PRINTS" id="PR00061">
    <property type="entry name" value="RIBOSOMALL19"/>
</dbReference>
<dbReference type="SUPFAM" id="SSF50104">
    <property type="entry name" value="Translation proteins SH3-like domain"/>
    <property type="match status" value="1"/>
</dbReference>
<dbReference type="PROSITE" id="PS01015">
    <property type="entry name" value="RIBOSOMAL_L19"/>
    <property type="match status" value="1"/>
</dbReference>
<reference key="1">
    <citation type="submission" date="2007-07" db="EMBL/GenBank/DDBJ databases">
        <title>Genome sequence of Campylobacter curvus 525.92 isolated from human feces.</title>
        <authorList>
            <person name="Fouts D.E."/>
            <person name="Mongodin E.F."/>
            <person name="Puiu D."/>
            <person name="Sebastian Y."/>
            <person name="Miller W.G."/>
            <person name="Mandrell R.E."/>
            <person name="Lastovica A.J."/>
            <person name="Nelson K.E."/>
        </authorList>
    </citation>
    <scope>NUCLEOTIDE SEQUENCE [LARGE SCALE GENOMIC DNA]</scope>
    <source>
        <strain>525.92</strain>
    </source>
</reference>
<sequence>MRNKYIQAFEDAQIASKSVPDFRAGDTLRVAIRIHEGDKTRVQNFEGICIARRGSGVGETFIIRKIGANSVGVERIFPIYSDSIEEIVVLRKGRVRRAKLFYLRDLRGKAAKIRELRK</sequence>
<proteinExistence type="inferred from homology"/>
<evidence type="ECO:0000255" key="1">
    <source>
        <dbReference type="HAMAP-Rule" id="MF_00402"/>
    </source>
</evidence>
<evidence type="ECO:0000305" key="2"/>